<accession>P0A252</accession>
<accession>P19479</accession>
<comment type="function">
    <text evidence="2">Thiol-specific peroxidase that catalyzes the reduction of hydrogen peroxide and organic hydroperoxides to water and alcohols, respectively. Plays a role in cell protection against oxidative stress by detoxifying peroxides.</text>
</comment>
<comment type="catalytic activity">
    <reaction evidence="2">
        <text>a hydroperoxide + NADH + H(+) = an alcohol + NAD(+) + H2O</text>
        <dbReference type="Rhea" id="RHEA:62628"/>
        <dbReference type="ChEBI" id="CHEBI:15377"/>
        <dbReference type="ChEBI" id="CHEBI:15378"/>
        <dbReference type="ChEBI" id="CHEBI:30879"/>
        <dbReference type="ChEBI" id="CHEBI:35924"/>
        <dbReference type="ChEBI" id="CHEBI:57540"/>
        <dbReference type="ChEBI" id="CHEBI:57945"/>
        <dbReference type="EC" id="1.11.1.26"/>
    </reaction>
</comment>
<comment type="subunit">
    <text evidence="2">Homodimer; disulfide-linked, upon oxidation. 5 homodimers assemble to form a ring-like decamer.</text>
</comment>
<comment type="subcellular location">
    <subcellularLocation>
        <location evidence="3">Cytoplasm</location>
    </subcellularLocation>
</comment>
<comment type="miscellaneous">
    <text evidence="2">The active site is a conserved redox-active cysteine residue, the peroxidatic cysteine (C(P)), which makes the nucleophilic attack on the peroxide substrate. The peroxide oxidizes the C(P)-SH to cysteine sulfenic acid (C(P)-SOH), which then reacts with another cysteine residue, the resolving cysteine (C(R)), to form a disulfide bridge. The disulfide is subsequently reduced by an appropriate electron donor to complete the catalytic cycle. In this typical 2-Cys peroxiredoxin, C(R) is provided by the other dimeric subunit to form an intersubunit disulfide. The disulfide is subsequently reduced by AhpF.</text>
</comment>
<comment type="similarity">
    <text evidence="5">Belongs to the peroxiredoxin family. AhpC/Prx1 subfamily.</text>
</comment>
<sequence>MSLINTKIKPFKNQAFKNGEFIEVTEKDTEGRWSVFFFYPADFTFVCPTELGDVADHYEELQKLGVDVYSVSTDTHFTHKAWHSSSETIAKIKYAMIGDPTGALTRNFDNMREDEGLADRATFVVDPQGIIQAIEVTAEGIGRDASDLLRKIKAAQYVAAHPGEVCPAKWKEGEATLAPSLDLVGKI</sequence>
<keyword id="KW-0049">Antioxidant</keyword>
<keyword id="KW-0963">Cytoplasm</keyword>
<keyword id="KW-1015">Disulfide bond</keyword>
<keyword id="KW-0560">Oxidoreductase</keyword>
<keyword id="KW-0575">Peroxidase</keyword>
<keyword id="KW-0676">Redox-active center</keyword>
<organism>
    <name type="scientific">Salmonella typhi</name>
    <dbReference type="NCBI Taxonomy" id="90370"/>
    <lineage>
        <taxon>Bacteria</taxon>
        <taxon>Pseudomonadati</taxon>
        <taxon>Pseudomonadota</taxon>
        <taxon>Gammaproteobacteria</taxon>
        <taxon>Enterobacterales</taxon>
        <taxon>Enterobacteriaceae</taxon>
        <taxon>Salmonella</taxon>
    </lineage>
</organism>
<gene>
    <name type="primary">ahpC</name>
    <name type="ordered locus">STY0653</name>
    <name type="ordered locus">t2260</name>
</gene>
<protein>
    <recommendedName>
        <fullName>Alkyl hydroperoxide reductase C</fullName>
        <ecNumber evidence="2">1.11.1.26</ecNumber>
    </recommendedName>
    <alternativeName>
        <fullName>Alkyl hydroperoxide reductase protein C22</fullName>
    </alternativeName>
    <alternativeName>
        <fullName>Peroxiredoxin</fullName>
    </alternativeName>
    <alternativeName>
        <fullName>Thioredoxin peroxidase</fullName>
    </alternativeName>
</protein>
<feature type="initiator methionine" description="Removed" evidence="1">
    <location>
        <position position="1"/>
    </location>
</feature>
<feature type="chain" id="PRO_0000135119" description="Alkyl hydroperoxide reductase C">
    <location>
        <begin position="2"/>
        <end position="187"/>
    </location>
</feature>
<feature type="domain" description="Thioredoxin" evidence="4">
    <location>
        <begin position="2"/>
        <end position="157"/>
    </location>
</feature>
<feature type="active site" description="Cysteine sulfenic acid (-SOH) intermediate" evidence="2">
    <location>
        <position position="47"/>
    </location>
</feature>
<feature type="disulfide bond" description="Interchain (with C-166); in linked form" evidence="2">
    <location>
        <position position="47"/>
    </location>
</feature>
<feature type="disulfide bond" description="Interchain (with C-47); in linked form" evidence="2">
    <location>
        <position position="166"/>
    </location>
</feature>
<proteinExistence type="inferred from homology"/>
<evidence type="ECO:0000250" key="1"/>
<evidence type="ECO:0000250" key="2">
    <source>
        <dbReference type="UniProtKB" id="P0A251"/>
    </source>
</evidence>
<evidence type="ECO:0000250" key="3">
    <source>
        <dbReference type="UniProtKB" id="P0AE08"/>
    </source>
</evidence>
<evidence type="ECO:0000255" key="4">
    <source>
        <dbReference type="PROSITE-ProRule" id="PRU00691"/>
    </source>
</evidence>
<evidence type="ECO:0000305" key="5"/>
<reference key="1">
    <citation type="journal article" date="2001" name="Nature">
        <title>Complete genome sequence of a multiple drug resistant Salmonella enterica serovar Typhi CT18.</title>
        <authorList>
            <person name="Parkhill J."/>
            <person name="Dougan G."/>
            <person name="James K.D."/>
            <person name="Thomson N.R."/>
            <person name="Pickard D."/>
            <person name="Wain J."/>
            <person name="Churcher C.M."/>
            <person name="Mungall K.L."/>
            <person name="Bentley S.D."/>
            <person name="Holden M.T.G."/>
            <person name="Sebaihia M."/>
            <person name="Baker S."/>
            <person name="Basham D."/>
            <person name="Brooks K."/>
            <person name="Chillingworth T."/>
            <person name="Connerton P."/>
            <person name="Cronin A."/>
            <person name="Davis P."/>
            <person name="Davies R.M."/>
            <person name="Dowd L."/>
            <person name="White N."/>
            <person name="Farrar J."/>
            <person name="Feltwell T."/>
            <person name="Hamlin N."/>
            <person name="Haque A."/>
            <person name="Hien T.T."/>
            <person name="Holroyd S."/>
            <person name="Jagels K."/>
            <person name="Krogh A."/>
            <person name="Larsen T.S."/>
            <person name="Leather S."/>
            <person name="Moule S."/>
            <person name="O'Gaora P."/>
            <person name="Parry C."/>
            <person name="Quail M.A."/>
            <person name="Rutherford K.M."/>
            <person name="Simmonds M."/>
            <person name="Skelton J."/>
            <person name="Stevens K."/>
            <person name="Whitehead S."/>
            <person name="Barrell B.G."/>
        </authorList>
    </citation>
    <scope>NUCLEOTIDE SEQUENCE [LARGE SCALE GENOMIC DNA]</scope>
    <source>
        <strain>CT18</strain>
    </source>
</reference>
<reference key="2">
    <citation type="journal article" date="2003" name="J. Bacteriol.">
        <title>Comparative genomics of Salmonella enterica serovar Typhi strains Ty2 and CT18.</title>
        <authorList>
            <person name="Deng W."/>
            <person name="Liou S.-R."/>
            <person name="Plunkett G. III"/>
            <person name="Mayhew G.F."/>
            <person name="Rose D.J."/>
            <person name="Burland V."/>
            <person name="Kodoyianni V."/>
            <person name="Schwartz D.C."/>
            <person name="Blattner F.R."/>
        </authorList>
    </citation>
    <scope>NUCLEOTIDE SEQUENCE [LARGE SCALE GENOMIC DNA]</scope>
    <source>
        <strain>ATCC 700931 / Ty2</strain>
    </source>
</reference>
<dbReference type="EC" id="1.11.1.26" evidence="2"/>
<dbReference type="EMBL" id="AL513382">
    <property type="protein sequence ID" value="CAD05084.1"/>
    <property type="molecule type" value="Genomic_DNA"/>
</dbReference>
<dbReference type="EMBL" id="AE014613">
    <property type="protein sequence ID" value="AAO69862.1"/>
    <property type="molecule type" value="Genomic_DNA"/>
</dbReference>
<dbReference type="RefSeq" id="NP_455184.1">
    <property type="nucleotide sequence ID" value="NC_003198.1"/>
</dbReference>
<dbReference type="RefSeq" id="WP_000052802.1">
    <property type="nucleotide sequence ID" value="NZ_WSUR01000008.1"/>
</dbReference>
<dbReference type="SMR" id="P0A252"/>
<dbReference type="STRING" id="220341.gene:17584665"/>
<dbReference type="GeneID" id="84237451"/>
<dbReference type="KEGG" id="stt:t2260"/>
<dbReference type="KEGG" id="sty:STY0653"/>
<dbReference type="PATRIC" id="fig|220341.7.peg.654"/>
<dbReference type="eggNOG" id="COG0450">
    <property type="taxonomic scope" value="Bacteria"/>
</dbReference>
<dbReference type="HOGENOM" id="CLU_042529_21_3_6"/>
<dbReference type="OMA" id="NNFGVMR"/>
<dbReference type="OrthoDB" id="9812811at2"/>
<dbReference type="Proteomes" id="UP000000541">
    <property type="component" value="Chromosome"/>
</dbReference>
<dbReference type="Proteomes" id="UP000002670">
    <property type="component" value="Chromosome"/>
</dbReference>
<dbReference type="GO" id="GO:0005829">
    <property type="term" value="C:cytosol"/>
    <property type="evidence" value="ECO:0007669"/>
    <property type="project" value="TreeGrafter"/>
</dbReference>
<dbReference type="GO" id="GO:0102039">
    <property type="term" value="F:NADH-dependent peroxiredoxin activity"/>
    <property type="evidence" value="ECO:0007669"/>
    <property type="project" value="UniProtKB-EC"/>
</dbReference>
<dbReference type="GO" id="GO:0008379">
    <property type="term" value="F:thioredoxin peroxidase activity"/>
    <property type="evidence" value="ECO:0007669"/>
    <property type="project" value="TreeGrafter"/>
</dbReference>
<dbReference type="GO" id="GO:0045454">
    <property type="term" value="P:cell redox homeostasis"/>
    <property type="evidence" value="ECO:0007669"/>
    <property type="project" value="TreeGrafter"/>
</dbReference>
<dbReference type="GO" id="GO:0033554">
    <property type="term" value="P:cellular response to stress"/>
    <property type="evidence" value="ECO:0007669"/>
    <property type="project" value="TreeGrafter"/>
</dbReference>
<dbReference type="GO" id="GO:0042744">
    <property type="term" value="P:hydrogen peroxide catabolic process"/>
    <property type="evidence" value="ECO:0007669"/>
    <property type="project" value="TreeGrafter"/>
</dbReference>
<dbReference type="GO" id="GO:0006979">
    <property type="term" value="P:response to oxidative stress"/>
    <property type="evidence" value="ECO:0007669"/>
    <property type="project" value="InterPro"/>
</dbReference>
<dbReference type="CDD" id="cd03015">
    <property type="entry name" value="PRX_Typ2cys"/>
    <property type="match status" value="1"/>
</dbReference>
<dbReference type="FunFam" id="3.40.30.10:FF:000002">
    <property type="entry name" value="Alkyl hydroperoxide reductase C"/>
    <property type="match status" value="1"/>
</dbReference>
<dbReference type="Gene3D" id="3.40.30.10">
    <property type="entry name" value="Glutaredoxin"/>
    <property type="match status" value="1"/>
</dbReference>
<dbReference type="InterPro" id="IPR017559">
    <property type="entry name" value="AhpC"/>
</dbReference>
<dbReference type="InterPro" id="IPR000866">
    <property type="entry name" value="AhpC/TSA"/>
</dbReference>
<dbReference type="InterPro" id="IPR050217">
    <property type="entry name" value="Peroxiredoxin"/>
</dbReference>
<dbReference type="InterPro" id="IPR024706">
    <property type="entry name" value="Peroxiredoxin_AhpC-typ"/>
</dbReference>
<dbReference type="InterPro" id="IPR019479">
    <property type="entry name" value="Peroxiredoxin_C"/>
</dbReference>
<dbReference type="InterPro" id="IPR036249">
    <property type="entry name" value="Thioredoxin-like_sf"/>
</dbReference>
<dbReference type="InterPro" id="IPR013766">
    <property type="entry name" value="Thioredoxin_domain"/>
</dbReference>
<dbReference type="NCBIfam" id="TIGR03137">
    <property type="entry name" value="AhpC"/>
    <property type="match status" value="1"/>
</dbReference>
<dbReference type="PANTHER" id="PTHR10681:SF121">
    <property type="entry name" value="ALKYL HYDROPEROXIDE REDUCTASE C"/>
    <property type="match status" value="1"/>
</dbReference>
<dbReference type="PANTHER" id="PTHR10681">
    <property type="entry name" value="THIOREDOXIN PEROXIDASE"/>
    <property type="match status" value="1"/>
</dbReference>
<dbReference type="Pfam" id="PF10417">
    <property type="entry name" value="1-cysPrx_C"/>
    <property type="match status" value="1"/>
</dbReference>
<dbReference type="Pfam" id="PF00578">
    <property type="entry name" value="AhpC-TSA"/>
    <property type="match status" value="1"/>
</dbReference>
<dbReference type="PIRSF" id="PIRSF000239">
    <property type="entry name" value="AHPC"/>
    <property type="match status" value="1"/>
</dbReference>
<dbReference type="SUPFAM" id="SSF52833">
    <property type="entry name" value="Thioredoxin-like"/>
    <property type="match status" value="1"/>
</dbReference>
<dbReference type="PROSITE" id="PS51352">
    <property type="entry name" value="THIOREDOXIN_2"/>
    <property type="match status" value="1"/>
</dbReference>
<name>AHPC_SALTI</name>